<proteinExistence type="inferred from homology"/>
<dbReference type="EC" id="2.5.1.75" evidence="1"/>
<dbReference type="EMBL" id="CP001598">
    <property type="protein sequence ID" value="ACQ49515.1"/>
    <property type="molecule type" value="Genomic_DNA"/>
</dbReference>
<dbReference type="RefSeq" id="WP_000504940.1">
    <property type="nucleotide sequence ID" value="NC_012659.1"/>
</dbReference>
<dbReference type="SMR" id="C3P4Y4"/>
<dbReference type="GeneID" id="45023542"/>
<dbReference type="KEGG" id="bai:BAA_3866"/>
<dbReference type="HOGENOM" id="CLU_032616_0_1_9"/>
<dbReference type="GO" id="GO:0005524">
    <property type="term" value="F:ATP binding"/>
    <property type="evidence" value="ECO:0007669"/>
    <property type="project" value="UniProtKB-UniRule"/>
</dbReference>
<dbReference type="GO" id="GO:0052381">
    <property type="term" value="F:tRNA dimethylallyltransferase activity"/>
    <property type="evidence" value="ECO:0007669"/>
    <property type="project" value="UniProtKB-UniRule"/>
</dbReference>
<dbReference type="GO" id="GO:0006400">
    <property type="term" value="P:tRNA modification"/>
    <property type="evidence" value="ECO:0007669"/>
    <property type="project" value="TreeGrafter"/>
</dbReference>
<dbReference type="FunFam" id="1.10.20.140:FF:000001">
    <property type="entry name" value="tRNA dimethylallyltransferase"/>
    <property type="match status" value="1"/>
</dbReference>
<dbReference type="Gene3D" id="1.10.20.140">
    <property type="match status" value="1"/>
</dbReference>
<dbReference type="Gene3D" id="3.40.50.300">
    <property type="entry name" value="P-loop containing nucleotide triphosphate hydrolases"/>
    <property type="match status" value="1"/>
</dbReference>
<dbReference type="HAMAP" id="MF_00185">
    <property type="entry name" value="IPP_trans"/>
    <property type="match status" value="1"/>
</dbReference>
<dbReference type="InterPro" id="IPR039657">
    <property type="entry name" value="Dimethylallyltransferase"/>
</dbReference>
<dbReference type="InterPro" id="IPR018022">
    <property type="entry name" value="IPT"/>
</dbReference>
<dbReference type="InterPro" id="IPR027417">
    <property type="entry name" value="P-loop_NTPase"/>
</dbReference>
<dbReference type="NCBIfam" id="TIGR00174">
    <property type="entry name" value="miaA"/>
    <property type="match status" value="1"/>
</dbReference>
<dbReference type="PANTHER" id="PTHR11088">
    <property type="entry name" value="TRNA DIMETHYLALLYLTRANSFERASE"/>
    <property type="match status" value="1"/>
</dbReference>
<dbReference type="PANTHER" id="PTHR11088:SF60">
    <property type="entry name" value="TRNA DIMETHYLALLYLTRANSFERASE"/>
    <property type="match status" value="1"/>
</dbReference>
<dbReference type="Pfam" id="PF01715">
    <property type="entry name" value="IPPT"/>
    <property type="match status" value="1"/>
</dbReference>
<dbReference type="SUPFAM" id="SSF52540">
    <property type="entry name" value="P-loop containing nucleoside triphosphate hydrolases"/>
    <property type="match status" value="2"/>
</dbReference>
<organism>
    <name type="scientific">Bacillus anthracis (strain A0248)</name>
    <dbReference type="NCBI Taxonomy" id="592021"/>
    <lineage>
        <taxon>Bacteria</taxon>
        <taxon>Bacillati</taxon>
        <taxon>Bacillota</taxon>
        <taxon>Bacilli</taxon>
        <taxon>Bacillales</taxon>
        <taxon>Bacillaceae</taxon>
        <taxon>Bacillus</taxon>
        <taxon>Bacillus cereus group</taxon>
    </lineage>
</organism>
<evidence type="ECO:0000255" key="1">
    <source>
        <dbReference type="HAMAP-Rule" id="MF_00185"/>
    </source>
</evidence>
<comment type="function">
    <text evidence="1">Catalyzes the transfer of a dimethylallyl group onto the adenine at position 37 in tRNAs that read codons beginning with uridine, leading to the formation of N6-(dimethylallyl)adenosine (i(6)A).</text>
</comment>
<comment type="catalytic activity">
    <reaction evidence="1">
        <text>adenosine(37) in tRNA + dimethylallyl diphosphate = N(6)-dimethylallyladenosine(37) in tRNA + diphosphate</text>
        <dbReference type="Rhea" id="RHEA:26482"/>
        <dbReference type="Rhea" id="RHEA-COMP:10162"/>
        <dbReference type="Rhea" id="RHEA-COMP:10375"/>
        <dbReference type="ChEBI" id="CHEBI:33019"/>
        <dbReference type="ChEBI" id="CHEBI:57623"/>
        <dbReference type="ChEBI" id="CHEBI:74411"/>
        <dbReference type="ChEBI" id="CHEBI:74415"/>
        <dbReference type="EC" id="2.5.1.75"/>
    </reaction>
</comment>
<comment type="cofactor">
    <cofactor evidence="1">
        <name>Mg(2+)</name>
        <dbReference type="ChEBI" id="CHEBI:18420"/>
    </cofactor>
</comment>
<comment type="subunit">
    <text evidence="1">Monomer.</text>
</comment>
<comment type="similarity">
    <text evidence="1">Belongs to the IPP transferase family.</text>
</comment>
<name>MIAA_BACAA</name>
<sequence length="317" mass="36652">MGEVQREKVAVIIGPTAVGKTKLSIDLAKALNGEIISGDSMQIYRTMDIGTAKVTKEEMDGIPHYMVDIKNPEESFSVAEFQERVRKHIREITERGKLPIIVGGTGLYIQSVLFDYQFTDDAGDAIYREQMEKLALERGVEYVHKKLQEVDPESAERIHANNVRRVIRALEIFHTSGEKMSDQLEKQENELLYDVSLIGLTMDREMLYDRINLRVDIMMDQGLLEEVEGLYNRGIRDCQSIQAIGYKEIYDYFEDRVSLEEAVSQLKTNSRRYAKRQLTWFRNKMDVTWFDVTDGEKTSEILRYIEGKLQLKSNNSK</sequence>
<reference key="1">
    <citation type="submission" date="2009-04" db="EMBL/GenBank/DDBJ databases">
        <title>Genome sequence of Bacillus anthracis A0248.</title>
        <authorList>
            <person name="Dodson R.J."/>
            <person name="Munk A.C."/>
            <person name="Bruce D."/>
            <person name="Detter C."/>
            <person name="Tapia R."/>
            <person name="Sutton G."/>
            <person name="Sims D."/>
            <person name="Brettin T."/>
        </authorList>
    </citation>
    <scope>NUCLEOTIDE SEQUENCE [LARGE SCALE GENOMIC DNA]</scope>
    <source>
        <strain>A0248</strain>
    </source>
</reference>
<accession>C3P4Y4</accession>
<keyword id="KW-0067">ATP-binding</keyword>
<keyword id="KW-0460">Magnesium</keyword>
<keyword id="KW-0547">Nucleotide-binding</keyword>
<keyword id="KW-0808">Transferase</keyword>
<keyword id="KW-0819">tRNA processing</keyword>
<feature type="chain" id="PRO_1000203933" description="tRNA dimethylallyltransferase">
    <location>
        <begin position="1"/>
        <end position="317"/>
    </location>
</feature>
<feature type="region of interest" description="Interaction with substrate tRNA" evidence="1">
    <location>
        <begin position="39"/>
        <end position="42"/>
    </location>
</feature>
<feature type="binding site" evidence="1">
    <location>
        <begin position="14"/>
        <end position="21"/>
    </location>
    <ligand>
        <name>ATP</name>
        <dbReference type="ChEBI" id="CHEBI:30616"/>
    </ligand>
</feature>
<feature type="binding site" evidence="1">
    <location>
        <begin position="16"/>
        <end position="21"/>
    </location>
    <ligand>
        <name>substrate</name>
    </ligand>
</feature>
<feature type="site" description="Interaction with substrate tRNA" evidence="1">
    <location>
        <position position="105"/>
    </location>
</feature>
<protein>
    <recommendedName>
        <fullName evidence="1">tRNA dimethylallyltransferase</fullName>
        <ecNumber evidence="1">2.5.1.75</ecNumber>
    </recommendedName>
    <alternativeName>
        <fullName evidence="1">Dimethylallyl diphosphate:tRNA dimethylallyltransferase</fullName>
        <shortName evidence="1">DMAPP:tRNA dimethylallyltransferase</shortName>
        <shortName evidence="1">DMATase</shortName>
    </alternativeName>
    <alternativeName>
        <fullName evidence="1">Isopentenyl-diphosphate:tRNA isopentenyltransferase</fullName>
        <shortName evidence="1">IPP transferase</shortName>
        <shortName evidence="1">IPPT</shortName>
        <shortName evidence="1">IPTase</shortName>
    </alternativeName>
</protein>
<gene>
    <name evidence="1" type="primary">miaA</name>
    <name type="ordered locus">BAA_3866</name>
</gene>